<keyword id="KW-0150">Chloroplast</keyword>
<keyword id="KW-0934">Plastid</keyword>
<keyword id="KW-1185">Reference proteome</keyword>
<keyword id="KW-0687">Ribonucleoprotein</keyword>
<keyword id="KW-0689">Ribosomal protein</keyword>
<keyword id="KW-0694">RNA-binding</keyword>
<keyword id="KW-0699">rRNA-binding</keyword>
<protein>
    <recommendedName>
        <fullName evidence="1">Small ribosomal subunit protein uS14c</fullName>
    </recommendedName>
    <alternativeName>
        <fullName evidence="2">30S ribosomal protein S14, chloroplastic</fullName>
    </alternativeName>
</protein>
<reference key="1">
    <citation type="journal article" date="2004" name="Gene">
        <title>The complete nucleotide sequence of wild rice (Oryza nivara) chloroplast genome: first genome wide comparative sequence analysis of wild and cultivated rice.</title>
        <authorList>
            <person name="Masood M.S."/>
            <person name="Nishikawa T."/>
            <person name="Fukuoka S."/>
            <person name="Njenga P.K."/>
            <person name="Tsudzuki T."/>
            <person name="Kadowaki K."/>
        </authorList>
    </citation>
    <scope>NUCLEOTIDE SEQUENCE [LARGE SCALE GENOMIC DNA]</scope>
    <source>
        <strain evidence="3">cv. SL10</strain>
    </source>
</reference>
<sequence length="103" mass="12254">MAKKSLIQRERKRQKLEQKYHLIRRSSKKKIRSKVYPLSLSEKTKMREKLQSLPRNSAPTRLHRRCFLTGRPRANYRDFGLSGHILREMVYACLLPGATRSSW</sequence>
<accession>Q6ENH6</accession>
<feature type="chain" id="PRO_0000130980" description="Small ribosomal subunit protein uS14c">
    <location>
        <begin position="1"/>
        <end position="103"/>
    </location>
</feature>
<comment type="function">
    <text evidence="1">Binds 16S rRNA, required for the assembly of 30S particles.</text>
</comment>
<comment type="subunit">
    <text evidence="1">Part of the 30S ribosomal subunit.</text>
</comment>
<comment type="subcellular location">
    <subcellularLocation>
        <location>Plastid</location>
        <location>Chloroplast</location>
    </subcellularLocation>
</comment>
<comment type="similarity">
    <text evidence="1">Belongs to the universal ribosomal protein uS14 family.</text>
</comment>
<gene>
    <name evidence="1" type="primary">rps14</name>
</gene>
<evidence type="ECO:0000255" key="1">
    <source>
        <dbReference type="HAMAP-Rule" id="MF_00537"/>
    </source>
</evidence>
<evidence type="ECO:0000305" key="2"/>
<evidence type="ECO:0000312" key="3">
    <source>
        <dbReference type="Proteomes" id="UP000006591"/>
    </source>
</evidence>
<proteinExistence type="inferred from homology"/>
<geneLocation type="chloroplast"/>
<organism>
    <name type="scientific">Oryza nivara</name>
    <name type="common">Indian wild rice</name>
    <name type="synonym">Oryza sativa f. spontanea</name>
    <dbReference type="NCBI Taxonomy" id="4536"/>
    <lineage>
        <taxon>Eukaryota</taxon>
        <taxon>Viridiplantae</taxon>
        <taxon>Streptophyta</taxon>
        <taxon>Embryophyta</taxon>
        <taxon>Tracheophyta</taxon>
        <taxon>Spermatophyta</taxon>
        <taxon>Magnoliopsida</taxon>
        <taxon>Liliopsida</taxon>
        <taxon>Poales</taxon>
        <taxon>Poaceae</taxon>
        <taxon>BOP clade</taxon>
        <taxon>Oryzoideae</taxon>
        <taxon>Oryzeae</taxon>
        <taxon>Oryzinae</taxon>
        <taxon>Oryza</taxon>
    </lineage>
</organism>
<name>RR14_ORYNI</name>
<dbReference type="EMBL" id="AP006728">
    <property type="protein sequence ID" value="BAD26776.1"/>
    <property type="molecule type" value="Genomic_DNA"/>
</dbReference>
<dbReference type="RefSeq" id="YP_052747.1">
    <property type="nucleotide sequence ID" value="NC_005973.1"/>
</dbReference>
<dbReference type="SMR" id="Q6ENH6"/>
<dbReference type="STRING" id="4536.Q6ENH6"/>
<dbReference type="GeneID" id="2885928"/>
<dbReference type="Proteomes" id="UP000006591">
    <property type="component" value="Chloroplast"/>
</dbReference>
<dbReference type="GO" id="GO:0009507">
    <property type="term" value="C:chloroplast"/>
    <property type="evidence" value="ECO:0007669"/>
    <property type="project" value="UniProtKB-SubCell"/>
</dbReference>
<dbReference type="GO" id="GO:0009536">
    <property type="term" value="C:plastid"/>
    <property type="evidence" value="ECO:0000305"/>
    <property type="project" value="Gramene"/>
</dbReference>
<dbReference type="GO" id="GO:0015935">
    <property type="term" value="C:small ribosomal subunit"/>
    <property type="evidence" value="ECO:0007669"/>
    <property type="project" value="TreeGrafter"/>
</dbReference>
<dbReference type="GO" id="GO:0019843">
    <property type="term" value="F:rRNA binding"/>
    <property type="evidence" value="ECO:0007669"/>
    <property type="project" value="UniProtKB-UniRule"/>
</dbReference>
<dbReference type="GO" id="GO:0003735">
    <property type="term" value="F:structural constituent of ribosome"/>
    <property type="evidence" value="ECO:0007669"/>
    <property type="project" value="InterPro"/>
</dbReference>
<dbReference type="GO" id="GO:0006412">
    <property type="term" value="P:translation"/>
    <property type="evidence" value="ECO:0007669"/>
    <property type="project" value="UniProtKB-UniRule"/>
</dbReference>
<dbReference type="FunFam" id="1.10.287.1480:FF:000001">
    <property type="entry name" value="30S ribosomal protein S14"/>
    <property type="match status" value="1"/>
</dbReference>
<dbReference type="Gene3D" id="1.10.287.1480">
    <property type="match status" value="1"/>
</dbReference>
<dbReference type="HAMAP" id="MF_00537">
    <property type="entry name" value="Ribosomal_uS14_1"/>
    <property type="match status" value="1"/>
</dbReference>
<dbReference type="InterPro" id="IPR001209">
    <property type="entry name" value="Ribosomal_uS14"/>
</dbReference>
<dbReference type="InterPro" id="IPR023036">
    <property type="entry name" value="Ribosomal_uS14_bac/plastid"/>
</dbReference>
<dbReference type="InterPro" id="IPR018271">
    <property type="entry name" value="Ribosomal_uS14_CS"/>
</dbReference>
<dbReference type="NCBIfam" id="NF006477">
    <property type="entry name" value="PRK08881.1"/>
    <property type="match status" value="1"/>
</dbReference>
<dbReference type="PANTHER" id="PTHR19836">
    <property type="entry name" value="30S RIBOSOMAL PROTEIN S14"/>
    <property type="match status" value="1"/>
</dbReference>
<dbReference type="PANTHER" id="PTHR19836:SF19">
    <property type="entry name" value="SMALL RIBOSOMAL SUBUNIT PROTEIN US14M"/>
    <property type="match status" value="1"/>
</dbReference>
<dbReference type="Pfam" id="PF00253">
    <property type="entry name" value="Ribosomal_S14"/>
    <property type="match status" value="1"/>
</dbReference>
<dbReference type="SUPFAM" id="SSF57716">
    <property type="entry name" value="Glucocorticoid receptor-like (DNA-binding domain)"/>
    <property type="match status" value="1"/>
</dbReference>
<dbReference type="PROSITE" id="PS00527">
    <property type="entry name" value="RIBOSOMAL_S14"/>
    <property type="match status" value="1"/>
</dbReference>